<reference key="1">
    <citation type="journal article" date="2008" name="BMC Genomics">
        <title>Complete genome of Phenylobacterium zucineum - a novel facultative intracellular bacterium isolated from human erythroleukemia cell line K562.</title>
        <authorList>
            <person name="Luo Y."/>
            <person name="Xu X."/>
            <person name="Ding Z."/>
            <person name="Liu Z."/>
            <person name="Zhang B."/>
            <person name="Yan Z."/>
            <person name="Sun J."/>
            <person name="Hu S."/>
            <person name="Hu X."/>
        </authorList>
    </citation>
    <scope>NUCLEOTIDE SEQUENCE [LARGE SCALE GENOMIC DNA]</scope>
    <source>
        <strain>HLK1</strain>
    </source>
</reference>
<accession>B4RFG2</accession>
<evidence type="ECO:0000255" key="1">
    <source>
        <dbReference type="HAMAP-Rule" id="MF_00046"/>
    </source>
</evidence>
<comment type="function">
    <text evidence="1">Cell wall formation.</text>
</comment>
<comment type="catalytic activity">
    <reaction evidence="1">
        <text>UDP-N-acetyl-alpha-D-muramate + L-alanine + ATP = UDP-N-acetyl-alpha-D-muramoyl-L-alanine + ADP + phosphate + H(+)</text>
        <dbReference type="Rhea" id="RHEA:23372"/>
        <dbReference type="ChEBI" id="CHEBI:15378"/>
        <dbReference type="ChEBI" id="CHEBI:30616"/>
        <dbReference type="ChEBI" id="CHEBI:43474"/>
        <dbReference type="ChEBI" id="CHEBI:57972"/>
        <dbReference type="ChEBI" id="CHEBI:70757"/>
        <dbReference type="ChEBI" id="CHEBI:83898"/>
        <dbReference type="ChEBI" id="CHEBI:456216"/>
        <dbReference type="EC" id="6.3.2.8"/>
    </reaction>
</comment>
<comment type="pathway">
    <text evidence="1">Cell wall biogenesis; peptidoglycan biosynthesis.</text>
</comment>
<comment type="subcellular location">
    <subcellularLocation>
        <location evidence="1">Cytoplasm</location>
    </subcellularLocation>
</comment>
<comment type="similarity">
    <text evidence="1">Belongs to the MurCDEF family.</text>
</comment>
<protein>
    <recommendedName>
        <fullName evidence="1">UDP-N-acetylmuramate--L-alanine ligase</fullName>
        <ecNumber evidence="1">6.3.2.8</ecNumber>
    </recommendedName>
    <alternativeName>
        <fullName evidence="1">UDP-N-acetylmuramoyl-L-alanine synthetase</fullName>
    </alternativeName>
</protein>
<sequence length="477" mass="50747">MNRRPVPFEIGPVHFVGIGGIGMSGIAEIMLRTGYQVQGSDAKPSANTERLEKLGARIFIGHDAKNVEGAYAIVYSTAVKPDNPEMVEGRARRLPLVRRAEMLAELMRLQFSIAVGGTHGKTTTTSMVAAILDAGGLDPTVVNGGIINAYGTNAKVGAGDWIVVEADESDGTFLKLKSTVAVVTNIDPEHLDHYGDFEAVKKAFQDFVENIPFYGFAAVCLDHPEVQAMTARVENRRLVTYGVNPQAEVRAHNIRMGPEGARFSVVIQPRDGGFISFDDLLLPMAGQHNVQNALAAIAVARELGVSPDAIRKGLAAFGGVKRRFTTTGVAGGVRVVDDYGHHPVEIASVLKAARAVSEGKVIAVVQPHRYTRLRDLFEDFCACFNDADTVIVADVYAAGEAPIEGVGKESLVEGLRRYGHRRVLPLPAPAGLAALVREEAHPGDLVVLLGAGDITSWAYALPGELEALSASGGAAAE</sequence>
<keyword id="KW-0067">ATP-binding</keyword>
<keyword id="KW-0131">Cell cycle</keyword>
<keyword id="KW-0132">Cell division</keyword>
<keyword id="KW-0133">Cell shape</keyword>
<keyword id="KW-0961">Cell wall biogenesis/degradation</keyword>
<keyword id="KW-0963">Cytoplasm</keyword>
<keyword id="KW-0436">Ligase</keyword>
<keyword id="KW-0547">Nucleotide-binding</keyword>
<keyword id="KW-0573">Peptidoglycan synthesis</keyword>
<keyword id="KW-1185">Reference proteome</keyword>
<dbReference type="EC" id="6.3.2.8" evidence="1"/>
<dbReference type="EMBL" id="CP000747">
    <property type="protein sequence ID" value="ACG78732.1"/>
    <property type="molecule type" value="Genomic_DNA"/>
</dbReference>
<dbReference type="RefSeq" id="WP_012522873.1">
    <property type="nucleotide sequence ID" value="NC_011144.1"/>
</dbReference>
<dbReference type="SMR" id="B4RFG2"/>
<dbReference type="STRING" id="450851.PHZ_c2322"/>
<dbReference type="KEGG" id="pzu:PHZ_c2322"/>
<dbReference type="eggNOG" id="COG0773">
    <property type="taxonomic scope" value="Bacteria"/>
</dbReference>
<dbReference type="HOGENOM" id="CLU_028104_2_2_5"/>
<dbReference type="OrthoDB" id="9804126at2"/>
<dbReference type="UniPathway" id="UPA00219"/>
<dbReference type="Proteomes" id="UP000001868">
    <property type="component" value="Chromosome"/>
</dbReference>
<dbReference type="GO" id="GO:0005737">
    <property type="term" value="C:cytoplasm"/>
    <property type="evidence" value="ECO:0007669"/>
    <property type="project" value="UniProtKB-SubCell"/>
</dbReference>
<dbReference type="GO" id="GO:0005524">
    <property type="term" value="F:ATP binding"/>
    <property type="evidence" value="ECO:0007669"/>
    <property type="project" value="UniProtKB-UniRule"/>
</dbReference>
<dbReference type="GO" id="GO:0008763">
    <property type="term" value="F:UDP-N-acetylmuramate-L-alanine ligase activity"/>
    <property type="evidence" value="ECO:0007669"/>
    <property type="project" value="UniProtKB-UniRule"/>
</dbReference>
<dbReference type="GO" id="GO:0051301">
    <property type="term" value="P:cell division"/>
    <property type="evidence" value="ECO:0007669"/>
    <property type="project" value="UniProtKB-KW"/>
</dbReference>
<dbReference type="GO" id="GO:0071555">
    <property type="term" value="P:cell wall organization"/>
    <property type="evidence" value="ECO:0007669"/>
    <property type="project" value="UniProtKB-KW"/>
</dbReference>
<dbReference type="GO" id="GO:0009252">
    <property type="term" value="P:peptidoglycan biosynthetic process"/>
    <property type="evidence" value="ECO:0007669"/>
    <property type="project" value="UniProtKB-UniRule"/>
</dbReference>
<dbReference type="GO" id="GO:0008360">
    <property type="term" value="P:regulation of cell shape"/>
    <property type="evidence" value="ECO:0007669"/>
    <property type="project" value="UniProtKB-KW"/>
</dbReference>
<dbReference type="Gene3D" id="3.90.190.20">
    <property type="entry name" value="Mur ligase, C-terminal domain"/>
    <property type="match status" value="1"/>
</dbReference>
<dbReference type="Gene3D" id="3.40.1190.10">
    <property type="entry name" value="Mur-like, catalytic domain"/>
    <property type="match status" value="1"/>
</dbReference>
<dbReference type="Gene3D" id="3.40.50.720">
    <property type="entry name" value="NAD(P)-binding Rossmann-like Domain"/>
    <property type="match status" value="1"/>
</dbReference>
<dbReference type="HAMAP" id="MF_00046">
    <property type="entry name" value="MurC"/>
    <property type="match status" value="1"/>
</dbReference>
<dbReference type="InterPro" id="IPR036565">
    <property type="entry name" value="Mur-like_cat_sf"/>
</dbReference>
<dbReference type="InterPro" id="IPR004101">
    <property type="entry name" value="Mur_ligase_C"/>
</dbReference>
<dbReference type="InterPro" id="IPR036615">
    <property type="entry name" value="Mur_ligase_C_dom_sf"/>
</dbReference>
<dbReference type="InterPro" id="IPR013221">
    <property type="entry name" value="Mur_ligase_cen"/>
</dbReference>
<dbReference type="InterPro" id="IPR000713">
    <property type="entry name" value="Mur_ligase_N"/>
</dbReference>
<dbReference type="InterPro" id="IPR050061">
    <property type="entry name" value="MurCDEF_pg_biosynth"/>
</dbReference>
<dbReference type="InterPro" id="IPR005758">
    <property type="entry name" value="UDP-N-AcMur_Ala_ligase_MurC"/>
</dbReference>
<dbReference type="NCBIfam" id="TIGR01082">
    <property type="entry name" value="murC"/>
    <property type="match status" value="1"/>
</dbReference>
<dbReference type="PANTHER" id="PTHR43445:SF3">
    <property type="entry name" value="UDP-N-ACETYLMURAMATE--L-ALANINE LIGASE"/>
    <property type="match status" value="1"/>
</dbReference>
<dbReference type="PANTHER" id="PTHR43445">
    <property type="entry name" value="UDP-N-ACETYLMURAMATE--L-ALANINE LIGASE-RELATED"/>
    <property type="match status" value="1"/>
</dbReference>
<dbReference type="Pfam" id="PF01225">
    <property type="entry name" value="Mur_ligase"/>
    <property type="match status" value="1"/>
</dbReference>
<dbReference type="Pfam" id="PF02875">
    <property type="entry name" value="Mur_ligase_C"/>
    <property type="match status" value="1"/>
</dbReference>
<dbReference type="Pfam" id="PF08245">
    <property type="entry name" value="Mur_ligase_M"/>
    <property type="match status" value="1"/>
</dbReference>
<dbReference type="SUPFAM" id="SSF51984">
    <property type="entry name" value="MurCD N-terminal domain"/>
    <property type="match status" value="1"/>
</dbReference>
<dbReference type="SUPFAM" id="SSF53623">
    <property type="entry name" value="MurD-like peptide ligases, catalytic domain"/>
    <property type="match status" value="1"/>
</dbReference>
<dbReference type="SUPFAM" id="SSF53244">
    <property type="entry name" value="MurD-like peptide ligases, peptide-binding domain"/>
    <property type="match status" value="1"/>
</dbReference>
<name>MURC_PHEZH</name>
<gene>
    <name evidence="1" type="primary">murC</name>
    <name type="ordered locus">PHZ_c2322</name>
</gene>
<organism>
    <name type="scientific">Phenylobacterium zucineum (strain HLK1)</name>
    <dbReference type="NCBI Taxonomy" id="450851"/>
    <lineage>
        <taxon>Bacteria</taxon>
        <taxon>Pseudomonadati</taxon>
        <taxon>Pseudomonadota</taxon>
        <taxon>Alphaproteobacteria</taxon>
        <taxon>Caulobacterales</taxon>
        <taxon>Caulobacteraceae</taxon>
        <taxon>Phenylobacterium</taxon>
    </lineage>
</organism>
<proteinExistence type="inferred from homology"/>
<feature type="chain" id="PRO_1000192105" description="UDP-N-acetylmuramate--L-alanine ligase">
    <location>
        <begin position="1"/>
        <end position="477"/>
    </location>
</feature>
<feature type="binding site" evidence="1">
    <location>
        <begin position="117"/>
        <end position="123"/>
    </location>
    <ligand>
        <name>ATP</name>
        <dbReference type="ChEBI" id="CHEBI:30616"/>
    </ligand>
</feature>